<comment type="function">
    <text>Seems to bind zinc and copper. Could play a special role in regulating zinc metabolism during the differentiation of stratified epithelia.</text>
</comment>
<comment type="similarity">
    <text evidence="4">Belongs to the metallothionein superfamily. Type 1 family.</text>
</comment>
<dbReference type="EMBL" id="U07807">
    <property type="protein sequence ID" value="AAA20232.1"/>
    <property type="molecule type" value="Genomic_DNA"/>
</dbReference>
<dbReference type="EMBL" id="AC026461">
    <property type="status" value="NOT_ANNOTATED_CDS"/>
    <property type="molecule type" value="mRNA"/>
</dbReference>
<dbReference type="EMBL" id="BC113442">
    <property type="protein sequence ID" value="AAI13443.1"/>
    <property type="molecule type" value="mRNA"/>
</dbReference>
<dbReference type="EMBL" id="BC113444">
    <property type="protein sequence ID" value="AAI13445.1"/>
    <property type="molecule type" value="mRNA"/>
</dbReference>
<dbReference type="CCDS" id="CCDS42165.1"/>
<dbReference type="PIR" id="A53640">
    <property type="entry name" value="A53640"/>
</dbReference>
<dbReference type="RefSeq" id="NP_116324.2">
    <property type="nucleotide sequence ID" value="NM_032935.3"/>
</dbReference>
<dbReference type="SMR" id="P47944"/>
<dbReference type="STRING" id="9606.ENSP00000219162"/>
<dbReference type="DrugBank" id="DB09130">
    <property type="generic name" value="Copper"/>
</dbReference>
<dbReference type="DrugBank" id="DB12965">
    <property type="generic name" value="Silver"/>
</dbReference>
<dbReference type="BioMuta" id="MT4"/>
<dbReference type="DMDM" id="288558817"/>
<dbReference type="MassIVE" id="P47944"/>
<dbReference type="PaxDb" id="9606-ENSP00000219162"/>
<dbReference type="PeptideAtlas" id="P47944"/>
<dbReference type="ProteomicsDB" id="55825"/>
<dbReference type="Antibodypedia" id="76693">
    <property type="antibodies" value="27 antibodies from 5 providers"/>
</dbReference>
<dbReference type="DNASU" id="84560"/>
<dbReference type="Ensembl" id="ENST00000219162.4">
    <property type="protein sequence ID" value="ENSP00000219162.3"/>
    <property type="gene ID" value="ENSG00000102891.4"/>
</dbReference>
<dbReference type="GeneID" id="84560"/>
<dbReference type="KEGG" id="hsa:84560"/>
<dbReference type="MANE-Select" id="ENST00000219162.4">
    <property type="protein sequence ID" value="ENSP00000219162.3"/>
    <property type="RefSeq nucleotide sequence ID" value="NM_032935.3"/>
    <property type="RefSeq protein sequence ID" value="NP_116324.2"/>
</dbReference>
<dbReference type="UCSC" id="uc002eje.1">
    <property type="organism name" value="human"/>
</dbReference>
<dbReference type="AGR" id="HGNC:18705"/>
<dbReference type="CTD" id="84560"/>
<dbReference type="DisGeNET" id="84560"/>
<dbReference type="GeneCards" id="MT4"/>
<dbReference type="HGNC" id="HGNC:18705">
    <property type="gene designation" value="MT4"/>
</dbReference>
<dbReference type="HPA" id="ENSG00000102891">
    <property type="expression patterns" value="Tissue enriched (skin)"/>
</dbReference>
<dbReference type="MIM" id="606206">
    <property type="type" value="gene"/>
</dbReference>
<dbReference type="neXtProt" id="NX_P47944"/>
<dbReference type="OpenTargets" id="ENSG00000102891"/>
<dbReference type="PharmGKB" id="PA38649"/>
<dbReference type="VEuPathDB" id="HostDB:ENSG00000102891"/>
<dbReference type="eggNOG" id="KOG4738">
    <property type="taxonomic scope" value="Eukaryota"/>
</dbReference>
<dbReference type="GeneTree" id="ENSGT00950000182967"/>
<dbReference type="HOGENOM" id="CLU_171204_2_0_1"/>
<dbReference type="InParanoid" id="P47944"/>
<dbReference type="OMA" id="DKCGCCP"/>
<dbReference type="PAN-GO" id="P47944">
    <property type="GO annotations" value="8 GO annotations based on evolutionary models"/>
</dbReference>
<dbReference type="PhylomeDB" id="P47944"/>
<dbReference type="TreeFam" id="TF336054"/>
<dbReference type="PathwayCommons" id="P47944"/>
<dbReference type="Reactome" id="R-HSA-5661231">
    <property type="pathway name" value="Metallothioneins bind metals"/>
</dbReference>
<dbReference type="BioGRID-ORCS" id="84560">
    <property type="hits" value="15 hits in 1107 CRISPR screens"/>
</dbReference>
<dbReference type="ChiTaRS" id="MT4">
    <property type="organism name" value="human"/>
</dbReference>
<dbReference type="GenomeRNAi" id="84560"/>
<dbReference type="Pharos" id="P47944">
    <property type="development level" value="Tbio"/>
</dbReference>
<dbReference type="PRO" id="PR:P47944"/>
<dbReference type="Proteomes" id="UP000005640">
    <property type="component" value="Chromosome 16"/>
</dbReference>
<dbReference type="RNAct" id="P47944">
    <property type="molecule type" value="protein"/>
</dbReference>
<dbReference type="Bgee" id="ENSG00000102891">
    <property type="expression patterns" value="Expressed in primordial germ cell in gonad and 76 other cell types or tissues"/>
</dbReference>
<dbReference type="GO" id="GO:0005737">
    <property type="term" value="C:cytoplasm"/>
    <property type="evidence" value="ECO:0000318"/>
    <property type="project" value="GO_Central"/>
</dbReference>
<dbReference type="GO" id="GO:0005634">
    <property type="term" value="C:nucleus"/>
    <property type="evidence" value="ECO:0000318"/>
    <property type="project" value="GO_Central"/>
</dbReference>
<dbReference type="GO" id="GO:0046872">
    <property type="term" value="F:metal ion binding"/>
    <property type="evidence" value="ECO:0000318"/>
    <property type="project" value="GO_Central"/>
</dbReference>
<dbReference type="GO" id="GO:0071276">
    <property type="term" value="P:cellular response to cadmium ion"/>
    <property type="evidence" value="ECO:0000318"/>
    <property type="project" value="GO_Central"/>
</dbReference>
<dbReference type="GO" id="GO:0071280">
    <property type="term" value="P:cellular response to copper ion"/>
    <property type="evidence" value="ECO:0000318"/>
    <property type="project" value="GO_Central"/>
</dbReference>
<dbReference type="GO" id="GO:0071294">
    <property type="term" value="P:cellular response to zinc ion"/>
    <property type="evidence" value="ECO:0000318"/>
    <property type="project" value="GO_Central"/>
</dbReference>
<dbReference type="GO" id="GO:0010273">
    <property type="term" value="P:detoxification of copper ion"/>
    <property type="evidence" value="ECO:0000318"/>
    <property type="project" value="GO_Central"/>
</dbReference>
<dbReference type="GO" id="GO:0006882">
    <property type="term" value="P:intracellular zinc ion homeostasis"/>
    <property type="evidence" value="ECO:0000318"/>
    <property type="project" value="GO_Central"/>
</dbReference>
<dbReference type="FunFam" id="4.10.10.10:FF:000001">
    <property type="entry name" value="Metallothionein"/>
    <property type="match status" value="1"/>
</dbReference>
<dbReference type="Gene3D" id="4.10.10.10">
    <property type="entry name" value="Metallothionein Isoform II"/>
    <property type="match status" value="1"/>
</dbReference>
<dbReference type="InterPro" id="IPR017854">
    <property type="entry name" value="Metalthion_dom_sf"/>
</dbReference>
<dbReference type="InterPro" id="IPR023587">
    <property type="entry name" value="Metalthion_dom_sf_vert"/>
</dbReference>
<dbReference type="InterPro" id="IPR000006">
    <property type="entry name" value="Metalthion_vert"/>
</dbReference>
<dbReference type="PANTHER" id="PTHR23299">
    <property type="entry name" value="METALLOTHIONEIN"/>
    <property type="match status" value="1"/>
</dbReference>
<dbReference type="PANTHER" id="PTHR23299:SF12">
    <property type="entry name" value="METALLOTHIONEIN-4"/>
    <property type="match status" value="1"/>
</dbReference>
<dbReference type="Pfam" id="PF00131">
    <property type="entry name" value="Metallothio"/>
    <property type="match status" value="1"/>
</dbReference>
<dbReference type="PRINTS" id="PR00860">
    <property type="entry name" value="MTVERTEBRATE"/>
</dbReference>
<dbReference type="SUPFAM" id="SSF57868">
    <property type="entry name" value="Metallothionein"/>
    <property type="match status" value="1"/>
</dbReference>
<proteinExistence type="evidence at protein level"/>
<name>MT4_HUMAN</name>
<evidence type="ECO:0000250" key="1">
    <source>
        <dbReference type="UniProtKB" id="P02795"/>
    </source>
</evidence>
<evidence type="ECO:0000269" key="2">
    <source>
    </source>
</evidence>
<evidence type="ECO:0000269" key="3">
    <source>
    </source>
</evidence>
<evidence type="ECO:0000305" key="4"/>
<keyword id="KW-0186">Copper</keyword>
<keyword id="KW-0479">Metal-binding</keyword>
<keyword id="KW-0480">Metal-thiolate cluster</keyword>
<keyword id="KW-1267">Proteomics identification</keyword>
<keyword id="KW-1185">Reference proteome</keyword>
<keyword id="KW-0862">Zinc</keyword>
<accession>P47944</accession>
<accession>Q14DA1</accession>
<gene>
    <name type="primary">MT4</name>
</gene>
<protein>
    <recommendedName>
        <fullName>Metallothionein-4</fullName>
        <shortName>MT-4</shortName>
    </recommendedName>
    <alternativeName>
        <fullName>Metallothionein-IV</fullName>
        <shortName>MT-IV</shortName>
    </alternativeName>
</protein>
<feature type="chain" id="PRO_0000197255" description="Metallothionein-4">
    <location>
        <begin position="1"/>
        <end position="62"/>
    </location>
</feature>
<feature type="binding site" evidence="1">
    <location>
        <position position="6"/>
    </location>
    <ligand>
        <name>a divalent metal cation</name>
        <dbReference type="ChEBI" id="CHEBI:60240"/>
        <label>1</label>
        <note>in cluster B</note>
    </ligand>
</feature>
<feature type="binding site" evidence="1">
    <location>
        <position position="8"/>
    </location>
    <ligand>
        <name>a divalent metal cation</name>
        <dbReference type="ChEBI" id="CHEBI:60240"/>
        <label>1</label>
        <note>in cluster B</note>
    </ligand>
</feature>
<feature type="binding site" evidence="1">
    <location>
        <position position="8"/>
    </location>
    <ligand>
        <name>a divalent metal cation</name>
        <dbReference type="ChEBI" id="CHEBI:60240"/>
        <label>2</label>
        <note>in cluster B</note>
    </ligand>
</feature>
<feature type="binding site" evidence="1">
    <location>
        <position position="14"/>
    </location>
    <ligand>
        <name>a divalent metal cation</name>
        <dbReference type="ChEBI" id="CHEBI:60240"/>
        <label>2</label>
        <note>in cluster B</note>
    </ligand>
</feature>
<feature type="binding site" evidence="1">
    <location>
        <position position="16"/>
    </location>
    <ligand>
        <name>a divalent metal cation</name>
        <dbReference type="ChEBI" id="CHEBI:60240"/>
        <label>2</label>
        <note>in cluster B</note>
    </ligand>
</feature>
<feature type="binding site" evidence="1">
    <location>
        <position position="16"/>
    </location>
    <ligand>
        <name>a divalent metal cation</name>
        <dbReference type="ChEBI" id="CHEBI:60240"/>
        <label>3</label>
        <note>in cluster B</note>
    </ligand>
</feature>
<feature type="binding site" evidence="1">
    <location>
        <position position="20"/>
    </location>
    <ligand>
        <name>a divalent metal cation</name>
        <dbReference type="ChEBI" id="CHEBI:60240"/>
        <label>3</label>
        <note>in cluster B</note>
    </ligand>
</feature>
<feature type="binding site" evidence="1">
    <location>
        <position position="22"/>
    </location>
    <ligand>
        <name>a divalent metal cation</name>
        <dbReference type="ChEBI" id="CHEBI:60240"/>
        <label>1</label>
        <note>in cluster B</note>
    </ligand>
</feature>
<feature type="binding site" evidence="1">
    <location>
        <position position="25"/>
    </location>
    <ligand>
        <name>a divalent metal cation</name>
        <dbReference type="ChEBI" id="CHEBI:60240"/>
        <label>1</label>
        <note>in cluster B</note>
    </ligand>
</feature>
<feature type="binding site" evidence="1">
    <location>
        <position position="25"/>
    </location>
    <ligand>
        <name>a divalent metal cation</name>
        <dbReference type="ChEBI" id="CHEBI:60240"/>
        <label>3</label>
        <note>in cluster B</note>
    </ligand>
</feature>
<feature type="binding site" evidence="1">
    <location>
        <position position="27"/>
    </location>
    <ligand>
        <name>a divalent metal cation</name>
        <dbReference type="ChEBI" id="CHEBI:60240"/>
        <label>2</label>
        <note>in cluster B</note>
    </ligand>
</feature>
<feature type="binding site" evidence="1">
    <location>
        <position position="34"/>
    </location>
    <ligand>
        <name>a divalent metal cation</name>
        <dbReference type="ChEBI" id="CHEBI:60240"/>
        <label>4</label>
        <note>in cluster A</note>
    </ligand>
</feature>
<feature type="binding site" evidence="1">
    <location>
        <position position="35"/>
    </location>
    <ligand>
        <name>a divalent metal cation</name>
        <dbReference type="ChEBI" id="CHEBI:60240"/>
        <label>4</label>
        <note>in cluster A</note>
    </ligand>
</feature>
<feature type="binding site" evidence="1">
    <location>
        <position position="35"/>
    </location>
    <ligand>
        <name>a divalent metal cation</name>
        <dbReference type="ChEBI" id="CHEBI:60240"/>
        <label>5</label>
        <note>in cluster A</note>
    </ligand>
</feature>
<feature type="binding site" evidence="1">
    <location>
        <position position="37"/>
    </location>
    <ligand>
        <name>a divalent metal cation</name>
        <dbReference type="ChEBI" id="CHEBI:60240"/>
        <label>5</label>
        <note>in cluster A</note>
    </ligand>
</feature>
<feature type="binding site" evidence="1">
    <location>
        <position position="38"/>
    </location>
    <ligand>
        <name>a divalent metal cation</name>
        <dbReference type="ChEBI" id="CHEBI:60240"/>
        <label>5</label>
        <note>in cluster A</note>
    </ligand>
</feature>
<feature type="binding site" evidence="1">
    <location>
        <position position="38"/>
    </location>
    <ligand>
        <name>a divalent metal cation</name>
        <dbReference type="ChEBI" id="CHEBI:60240"/>
        <label>6</label>
        <note>in cluster A</note>
    </ligand>
</feature>
<feature type="binding site" evidence="1">
    <location>
        <position position="42"/>
    </location>
    <ligand>
        <name>a divalent metal cation</name>
        <dbReference type="ChEBI" id="CHEBI:60240"/>
        <label>6</label>
        <note>in cluster A</note>
    </ligand>
</feature>
<feature type="binding site" evidence="1">
    <location>
        <position position="45"/>
    </location>
    <ligand>
        <name>a divalent metal cation</name>
        <dbReference type="ChEBI" id="CHEBI:60240"/>
        <label>4</label>
        <note>in cluster A</note>
    </ligand>
</feature>
<feature type="binding site" evidence="1">
    <location>
        <position position="45"/>
    </location>
    <ligand>
        <name>a divalent metal cation</name>
        <dbReference type="ChEBI" id="CHEBI:60240"/>
        <label>6</label>
        <note>in cluster A</note>
    </ligand>
</feature>
<feature type="binding site" evidence="1">
    <location>
        <position position="49"/>
    </location>
    <ligand>
        <name>a divalent metal cation</name>
        <dbReference type="ChEBI" id="CHEBI:60240"/>
        <label>4</label>
        <note>in cluster A</note>
    </ligand>
</feature>
<feature type="binding site" evidence="1">
    <location>
        <position position="51"/>
    </location>
    <ligand>
        <name>a divalent metal cation</name>
        <dbReference type="ChEBI" id="CHEBI:60240"/>
        <label>5</label>
        <note>in cluster A</note>
    </ligand>
</feature>
<feature type="binding site" evidence="1">
    <location>
        <position position="51"/>
    </location>
    <ligand>
        <name>a divalent metal cation</name>
        <dbReference type="ChEBI" id="CHEBI:60240"/>
        <label>7</label>
        <note>in cluster A</note>
    </ligand>
</feature>
<feature type="binding site" evidence="1">
    <location>
        <position position="58"/>
    </location>
    <ligand>
        <name>a divalent metal cation</name>
        <dbReference type="ChEBI" id="CHEBI:60240"/>
        <label>7</label>
        <note>in cluster A</note>
    </ligand>
</feature>
<feature type="binding site" evidence="1">
    <location>
        <position position="60"/>
    </location>
    <ligand>
        <name>a divalent metal cation</name>
        <dbReference type="ChEBI" id="CHEBI:60240"/>
        <label>7</label>
        <note>in cluster A</note>
    </ligand>
</feature>
<feature type="binding site" evidence="1">
    <location>
        <position position="61"/>
    </location>
    <ligand>
        <name>a divalent metal cation</name>
        <dbReference type="ChEBI" id="CHEBI:60240"/>
        <label>6</label>
        <note>in cluster A</note>
    </ligand>
</feature>
<feature type="binding site" evidence="1">
    <location>
        <position position="61"/>
    </location>
    <ligand>
        <name>a divalent metal cation</name>
        <dbReference type="ChEBI" id="CHEBI:60240"/>
        <label>7</label>
        <note>in cluster A</note>
    </ligand>
</feature>
<feature type="sequence variant" id="VAR_034110" description="In dbSNP:rs666636." evidence="2 3">
    <original>Y</original>
    <variation>C</variation>
    <location>
        <position position="30"/>
    </location>
</feature>
<feature type="sequence variant" id="VAR_034111" description="In dbSNP:rs666647." evidence="2 3">
    <original>W</original>
    <variation>R</variation>
    <location>
        <position position="31"/>
    </location>
</feature>
<feature type="sequence variant" id="VAR_034112" description="In dbSNP:rs11643815.">
    <original>G</original>
    <variation>D</variation>
    <location>
        <position position="48"/>
    </location>
</feature>
<reference key="1">
    <citation type="journal article" date="1994" name="Biochemistry">
        <title>Induction of a new metallothionein isoform (MT-IV) occurs during differentiation of stratified squamous epithelia.</title>
        <authorList>
            <person name="Quaife C.J."/>
            <person name="Findley S.D."/>
            <person name="Erickson J.C."/>
            <person name="Froelick G.J."/>
            <person name="Kelly E.J."/>
            <person name="Zambrowicz B.P."/>
            <person name="Palmiter R.D."/>
        </authorList>
    </citation>
    <scope>NUCLEOTIDE SEQUENCE [GENOMIC DNA]</scope>
    <scope>VARIANTS CYS-30 AND ARG-31</scope>
</reference>
<reference key="2">
    <citation type="journal article" date="2004" name="Nature">
        <title>The sequence and analysis of duplication-rich human chromosome 16.</title>
        <authorList>
            <person name="Martin J."/>
            <person name="Han C."/>
            <person name="Gordon L.A."/>
            <person name="Terry A."/>
            <person name="Prabhakar S."/>
            <person name="She X."/>
            <person name="Xie G."/>
            <person name="Hellsten U."/>
            <person name="Chan Y.M."/>
            <person name="Altherr M."/>
            <person name="Couronne O."/>
            <person name="Aerts A."/>
            <person name="Bajorek E."/>
            <person name="Black S."/>
            <person name="Blumer H."/>
            <person name="Branscomb E."/>
            <person name="Brown N.C."/>
            <person name="Bruno W.J."/>
            <person name="Buckingham J.M."/>
            <person name="Callen D.F."/>
            <person name="Campbell C.S."/>
            <person name="Campbell M.L."/>
            <person name="Campbell E.W."/>
            <person name="Caoile C."/>
            <person name="Challacombe J.F."/>
            <person name="Chasteen L.A."/>
            <person name="Chertkov O."/>
            <person name="Chi H.C."/>
            <person name="Christensen M."/>
            <person name="Clark L.M."/>
            <person name="Cohn J.D."/>
            <person name="Denys M."/>
            <person name="Detter J.C."/>
            <person name="Dickson M."/>
            <person name="Dimitrijevic-Bussod M."/>
            <person name="Escobar J."/>
            <person name="Fawcett J.J."/>
            <person name="Flowers D."/>
            <person name="Fotopulos D."/>
            <person name="Glavina T."/>
            <person name="Gomez M."/>
            <person name="Gonzales E."/>
            <person name="Goodstein D."/>
            <person name="Goodwin L.A."/>
            <person name="Grady D.L."/>
            <person name="Grigoriev I."/>
            <person name="Groza M."/>
            <person name="Hammon N."/>
            <person name="Hawkins T."/>
            <person name="Haydu L."/>
            <person name="Hildebrand C.E."/>
            <person name="Huang W."/>
            <person name="Israni S."/>
            <person name="Jett J."/>
            <person name="Jewett P.B."/>
            <person name="Kadner K."/>
            <person name="Kimball H."/>
            <person name="Kobayashi A."/>
            <person name="Krawczyk M.-C."/>
            <person name="Leyba T."/>
            <person name="Longmire J.L."/>
            <person name="Lopez F."/>
            <person name="Lou Y."/>
            <person name="Lowry S."/>
            <person name="Ludeman T."/>
            <person name="Manohar C.F."/>
            <person name="Mark G.A."/>
            <person name="McMurray K.L."/>
            <person name="Meincke L.J."/>
            <person name="Morgan J."/>
            <person name="Moyzis R.K."/>
            <person name="Mundt M.O."/>
            <person name="Munk A.C."/>
            <person name="Nandkeshwar R.D."/>
            <person name="Pitluck S."/>
            <person name="Pollard M."/>
            <person name="Predki P."/>
            <person name="Parson-Quintana B."/>
            <person name="Ramirez L."/>
            <person name="Rash S."/>
            <person name="Retterer J."/>
            <person name="Ricke D.O."/>
            <person name="Robinson D.L."/>
            <person name="Rodriguez A."/>
            <person name="Salamov A."/>
            <person name="Saunders E.H."/>
            <person name="Scott D."/>
            <person name="Shough T."/>
            <person name="Stallings R.L."/>
            <person name="Stalvey M."/>
            <person name="Sutherland R.D."/>
            <person name="Tapia R."/>
            <person name="Tesmer J.G."/>
            <person name="Thayer N."/>
            <person name="Thompson L.S."/>
            <person name="Tice H."/>
            <person name="Torney D.C."/>
            <person name="Tran-Gyamfi M."/>
            <person name="Tsai M."/>
            <person name="Ulanovsky L.E."/>
            <person name="Ustaszewska A."/>
            <person name="Vo N."/>
            <person name="White P.S."/>
            <person name="Williams A.L."/>
            <person name="Wills P.L."/>
            <person name="Wu J.-R."/>
            <person name="Wu K."/>
            <person name="Yang J."/>
            <person name="DeJong P."/>
            <person name="Bruce D."/>
            <person name="Doggett N.A."/>
            <person name="Deaven L."/>
            <person name="Schmutz J."/>
            <person name="Grimwood J."/>
            <person name="Richardson P."/>
            <person name="Rokhsar D.S."/>
            <person name="Eichler E.E."/>
            <person name="Gilna P."/>
            <person name="Lucas S.M."/>
            <person name="Myers R.M."/>
            <person name="Rubin E.M."/>
            <person name="Pennacchio L.A."/>
        </authorList>
    </citation>
    <scope>NUCLEOTIDE SEQUENCE [LARGE SCALE GENOMIC DNA]</scope>
</reference>
<reference key="3">
    <citation type="journal article" date="2004" name="Genome Res.">
        <title>The status, quality, and expansion of the NIH full-length cDNA project: the Mammalian Gene Collection (MGC).</title>
        <authorList>
            <consortium name="The MGC Project Team"/>
        </authorList>
    </citation>
    <scope>NUCLEOTIDE SEQUENCE [LARGE SCALE MRNA]</scope>
    <scope>VARIANTS CYS-30 AND ARG-31</scope>
</reference>
<organism>
    <name type="scientific">Homo sapiens</name>
    <name type="common">Human</name>
    <dbReference type="NCBI Taxonomy" id="9606"/>
    <lineage>
        <taxon>Eukaryota</taxon>
        <taxon>Metazoa</taxon>
        <taxon>Chordata</taxon>
        <taxon>Craniata</taxon>
        <taxon>Vertebrata</taxon>
        <taxon>Euteleostomi</taxon>
        <taxon>Mammalia</taxon>
        <taxon>Eutheria</taxon>
        <taxon>Euarchontoglires</taxon>
        <taxon>Primates</taxon>
        <taxon>Haplorrhini</taxon>
        <taxon>Catarrhini</taxon>
        <taxon>Hominidae</taxon>
        <taxon>Homo</taxon>
    </lineage>
</organism>
<sequence length="62" mass="6509">MDPRECVCMSGGICMCGDNCKCTTCNCKTYWKSCCPCCPPGCAKCARGCICKGGSDKCSCCP</sequence>